<sequence>MEKFRVHGPFTLSGTVDISGAKNAALPILFAAVLATEPVTLTNVPDLKDVDTTFKILRKLGVVVERDESGAVQIDASKIDHYVAPYELVKTMRASIWALAPLVARFHEGQVSLPGGCTIGARPVDMHISSLEKMGALIELDEGYVKATSNGRLHGARIYMDKVSVGATLSVMMAATLAEGTTTIENAAREPEIVDTALFLNAMGAKISGAGTDTITIEGVERLTGCQHRIVADRIETGTFLVAAAVSGGKITCRGTKADTLEAVIEKLREAGMEVTVTEDTITLDSKGQRPKAVNIRTMPHPGFPTDMQAQFTLLNVVAEGTSRITETIFENRFMHIPELNRMGAKGEIEGNTAICHGVEKLKSAEVMATDLRASISLVLAGCIASGETIVDRIYHIDRGYEHIEDKLRGIGAKIERFSTKFEE</sequence>
<keyword id="KW-0131">Cell cycle</keyword>
<keyword id="KW-0132">Cell division</keyword>
<keyword id="KW-0133">Cell shape</keyword>
<keyword id="KW-0961">Cell wall biogenesis/degradation</keyword>
<keyword id="KW-0963">Cytoplasm</keyword>
<keyword id="KW-0573">Peptidoglycan synthesis</keyword>
<keyword id="KW-0670">Pyruvate</keyword>
<keyword id="KW-0808">Transferase</keyword>
<dbReference type="EC" id="2.5.1.7" evidence="1"/>
<dbReference type="EMBL" id="CP001091">
    <property type="protein sequence ID" value="ACE61989.1"/>
    <property type="molecule type" value="Genomic_DNA"/>
</dbReference>
<dbReference type="RefSeq" id="WP_005615698.1">
    <property type="nucleotide sequence ID" value="NC_010939.1"/>
</dbReference>
<dbReference type="SMR" id="B3H259"/>
<dbReference type="KEGG" id="apa:APP7_1337"/>
<dbReference type="HOGENOM" id="CLU_027387_0_0_6"/>
<dbReference type="UniPathway" id="UPA00219"/>
<dbReference type="Proteomes" id="UP000001226">
    <property type="component" value="Chromosome"/>
</dbReference>
<dbReference type="GO" id="GO:0005737">
    <property type="term" value="C:cytoplasm"/>
    <property type="evidence" value="ECO:0007669"/>
    <property type="project" value="UniProtKB-SubCell"/>
</dbReference>
<dbReference type="GO" id="GO:0008760">
    <property type="term" value="F:UDP-N-acetylglucosamine 1-carboxyvinyltransferase activity"/>
    <property type="evidence" value="ECO:0007669"/>
    <property type="project" value="UniProtKB-UniRule"/>
</dbReference>
<dbReference type="GO" id="GO:0051301">
    <property type="term" value="P:cell division"/>
    <property type="evidence" value="ECO:0007669"/>
    <property type="project" value="UniProtKB-KW"/>
</dbReference>
<dbReference type="GO" id="GO:0071555">
    <property type="term" value="P:cell wall organization"/>
    <property type="evidence" value="ECO:0007669"/>
    <property type="project" value="UniProtKB-KW"/>
</dbReference>
<dbReference type="GO" id="GO:0009252">
    <property type="term" value="P:peptidoglycan biosynthetic process"/>
    <property type="evidence" value="ECO:0007669"/>
    <property type="project" value="UniProtKB-UniRule"/>
</dbReference>
<dbReference type="GO" id="GO:0008360">
    <property type="term" value="P:regulation of cell shape"/>
    <property type="evidence" value="ECO:0007669"/>
    <property type="project" value="UniProtKB-KW"/>
</dbReference>
<dbReference type="GO" id="GO:0019277">
    <property type="term" value="P:UDP-N-acetylgalactosamine biosynthetic process"/>
    <property type="evidence" value="ECO:0007669"/>
    <property type="project" value="InterPro"/>
</dbReference>
<dbReference type="CDD" id="cd01555">
    <property type="entry name" value="UdpNAET"/>
    <property type="match status" value="1"/>
</dbReference>
<dbReference type="FunFam" id="3.65.10.10:FF:000002">
    <property type="entry name" value="UDP-N-acetylglucosamine 1-carboxyvinyltransferase"/>
    <property type="match status" value="1"/>
</dbReference>
<dbReference type="Gene3D" id="3.65.10.10">
    <property type="entry name" value="Enolpyruvate transferase domain"/>
    <property type="match status" value="2"/>
</dbReference>
<dbReference type="HAMAP" id="MF_00111">
    <property type="entry name" value="MurA"/>
    <property type="match status" value="1"/>
</dbReference>
<dbReference type="InterPro" id="IPR001986">
    <property type="entry name" value="Enolpyruvate_Tfrase_dom"/>
</dbReference>
<dbReference type="InterPro" id="IPR036968">
    <property type="entry name" value="Enolpyruvate_Tfrase_sf"/>
</dbReference>
<dbReference type="InterPro" id="IPR050068">
    <property type="entry name" value="MurA_subfamily"/>
</dbReference>
<dbReference type="InterPro" id="IPR013792">
    <property type="entry name" value="RNA3'P_cycl/enolpyr_Trfase_a/b"/>
</dbReference>
<dbReference type="InterPro" id="IPR005750">
    <property type="entry name" value="UDP_GlcNAc_COvinyl_MurA"/>
</dbReference>
<dbReference type="NCBIfam" id="TIGR01072">
    <property type="entry name" value="murA"/>
    <property type="match status" value="1"/>
</dbReference>
<dbReference type="NCBIfam" id="NF006873">
    <property type="entry name" value="PRK09369.1"/>
    <property type="match status" value="1"/>
</dbReference>
<dbReference type="PANTHER" id="PTHR43783">
    <property type="entry name" value="UDP-N-ACETYLGLUCOSAMINE 1-CARBOXYVINYLTRANSFERASE"/>
    <property type="match status" value="1"/>
</dbReference>
<dbReference type="PANTHER" id="PTHR43783:SF1">
    <property type="entry name" value="UDP-N-ACETYLGLUCOSAMINE 1-CARBOXYVINYLTRANSFERASE"/>
    <property type="match status" value="1"/>
</dbReference>
<dbReference type="Pfam" id="PF00275">
    <property type="entry name" value="EPSP_synthase"/>
    <property type="match status" value="1"/>
</dbReference>
<dbReference type="SUPFAM" id="SSF55205">
    <property type="entry name" value="EPT/RTPC-like"/>
    <property type="match status" value="1"/>
</dbReference>
<proteinExistence type="inferred from homology"/>
<comment type="function">
    <text evidence="1">Cell wall formation. Adds enolpyruvyl to UDP-N-acetylglucosamine.</text>
</comment>
<comment type="catalytic activity">
    <reaction evidence="1">
        <text>phosphoenolpyruvate + UDP-N-acetyl-alpha-D-glucosamine = UDP-N-acetyl-3-O-(1-carboxyvinyl)-alpha-D-glucosamine + phosphate</text>
        <dbReference type="Rhea" id="RHEA:18681"/>
        <dbReference type="ChEBI" id="CHEBI:43474"/>
        <dbReference type="ChEBI" id="CHEBI:57705"/>
        <dbReference type="ChEBI" id="CHEBI:58702"/>
        <dbReference type="ChEBI" id="CHEBI:68483"/>
        <dbReference type="EC" id="2.5.1.7"/>
    </reaction>
</comment>
<comment type="pathway">
    <text evidence="1">Cell wall biogenesis; peptidoglycan biosynthesis.</text>
</comment>
<comment type="subcellular location">
    <subcellularLocation>
        <location evidence="1">Cytoplasm</location>
    </subcellularLocation>
</comment>
<comment type="similarity">
    <text evidence="1">Belongs to the EPSP synthase family. MurA subfamily.</text>
</comment>
<feature type="chain" id="PRO_1000094666" description="UDP-N-acetylglucosamine 1-carboxyvinyltransferase">
    <location>
        <begin position="1"/>
        <end position="424"/>
    </location>
</feature>
<feature type="active site" description="Proton donor" evidence="1">
    <location>
        <position position="117"/>
    </location>
</feature>
<feature type="binding site" evidence="1">
    <location>
        <begin position="22"/>
        <end position="23"/>
    </location>
    <ligand>
        <name>phosphoenolpyruvate</name>
        <dbReference type="ChEBI" id="CHEBI:58702"/>
    </ligand>
</feature>
<feature type="binding site" evidence="1">
    <location>
        <position position="93"/>
    </location>
    <ligand>
        <name>UDP-N-acetyl-alpha-D-glucosamine</name>
        <dbReference type="ChEBI" id="CHEBI:57705"/>
    </ligand>
</feature>
<feature type="binding site" evidence="1">
    <location>
        <begin position="162"/>
        <end position="165"/>
    </location>
    <ligand>
        <name>UDP-N-acetyl-alpha-D-glucosamine</name>
        <dbReference type="ChEBI" id="CHEBI:57705"/>
    </ligand>
</feature>
<feature type="binding site" evidence="1">
    <location>
        <position position="307"/>
    </location>
    <ligand>
        <name>UDP-N-acetyl-alpha-D-glucosamine</name>
        <dbReference type="ChEBI" id="CHEBI:57705"/>
    </ligand>
</feature>
<feature type="binding site" evidence="1">
    <location>
        <position position="329"/>
    </location>
    <ligand>
        <name>UDP-N-acetyl-alpha-D-glucosamine</name>
        <dbReference type="ChEBI" id="CHEBI:57705"/>
    </ligand>
</feature>
<feature type="modified residue" description="2-(S-cysteinyl)pyruvic acid O-phosphothioketal" evidence="1">
    <location>
        <position position="117"/>
    </location>
</feature>
<evidence type="ECO:0000255" key="1">
    <source>
        <dbReference type="HAMAP-Rule" id="MF_00111"/>
    </source>
</evidence>
<accession>B3H259</accession>
<reference key="1">
    <citation type="submission" date="2008-06" db="EMBL/GenBank/DDBJ databases">
        <title>Genome and proteome analysis of A. pleuropneumoniae serotype 7.</title>
        <authorList>
            <person name="Linke B."/>
            <person name="Buettner F."/>
            <person name="Martinez-Arias R."/>
            <person name="Goesmann A."/>
            <person name="Baltes N."/>
            <person name="Tegetmeyer H."/>
            <person name="Singh M."/>
            <person name="Gerlach G.F."/>
        </authorList>
    </citation>
    <scope>NUCLEOTIDE SEQUENCE [LARGE SCALE GENOMIC DNA]</scope>
    <source>
        <strain>AP76</strain>
    </source>
</reference>
<organism>
    <name type="scientific">Actinobacillus pleuropneumoniae serotype 7 (strain AP76)</name>
    <dbReference type="NCBI Taxonomy" id="537457"/>
    <lineage>
        <taxon>Bacteria</taxon>
        <taxon>Pseudomonadati</taxon>
        <taxon>Pseudomonadota</taxon>
        <taxon>Gammaproteobacteria</taxon>
        <taxon>Pasteurellales</taxon>
        <taxon>Pasteurellaceae</taxon>
        <taxon>Actinobacillus</taxon>
    </lineage>
</organism>
<protein>
    <recommendedName>
        <fullName evidence="1">UDP-N-acetylglucosamine 1-carboxyvinyltransferase</fullName>
        <ecNumber evidence="1">2.5.1.7</ecNumber>
    </recommendedName>
    <alternativeName>
        <fullName evidence="1">Enoylpyruvate transferase</fullName>
    </alternativeName>
    <alternativeName>
        <fullName evidence="1">UDP-N-acetylglucosamine enolpyruvyl transferase</fullName>
        <shortName evidence="1">EPT</shortName>
    </alternativeName>
</protein>
<gene>
    <name evidence="1" type="primary">murA</name>
    <name type="ordered locus">APP7_1337</name>
</gene>
<name>MURA_ACTP7</name>